<proteinExistence type="evidence at protein level"/>
<evidence type="ECO:0000250" key="1"/>
<evidence type="ECO:0000255" key="2"/>
<evidence type="ECO:0000269" key="3">
    <source>
    </source>
</evidence>
<evidence type="ECO:0000269" key="4">
    <source>
    </source>
</evidence>
<evidence type="ECO:0000269" key="5">
    <source>
    </source>
</evidence>
<evidence type="ECO:0000269" key="6">
    <source>
    </source>
</evidence>
<evidence type="ECO:0000269" key="7">
    <source>
    </source>
</evidence>
<evidence type="ECO:0000269" key="8">
    <source>
    </source>
</evidence>
<evidence type="ECO:0000269" key="9">
    <source>
    </source>
</evidence>
<evidence type="ECO:0000269" key="10">
    <source>
    </source>
</evidence>
<evidence type="ECO:0000269" key="11">
    <source>
    </source>
</evidence>
<evidence type="ECO:0000269" key="12">
    <source>
    </source>
</evidence>
<evidence type="ECO:0000303" key="13">
    <source>
    </source>
</evidence>
<evidence type="ECO:0000303" key="14">
    <source>
    </source>
</evidence>
<evidence type="ECO:0000303" key="15">
    <source>
    </source>
</evidence>
<evidence type="ECO:0000303" key="16">
    <source>
    </source>
</evidence>
<evidence type="ECO:0000305" key="17"/>
<evidence type="ECO:0000305" key="18">
    <source>
    </source>
</evidence>
<evidence type="ECO:0000312" key="19">
    <source>
        <dbReference type="Araport" id="AT5G08740"/>
    </source>
</evidence>
<evidence type="ECO:0000312" key="20">
    <source>
        <dbReference type="EMBL" id="CAC35879.1"/>
    </source>
</evidence>
<sequence>MAVLSSVSSLIPFSYGATRLTSKASLASRTSGFNLSSRWNSTRNSPMLYLSRAVTNNSGTTEISDNETAPRTYSWPDNKRPRVCILGGGFGGLYTALRLESLVWPEDKKPQVVLVDQSERFVFKPMLYELLSGEVDVWEIAPRFSDLLTNTGIQFLRDRVKTLLPCDHLGVNGSEISVTGGTVLLESGFKIEYDWLVLALGAESKLDVVPGAMELAFPFYTLEDAIRVNEKLSKLERKNFKDGSAIKVAVVGCGYAGVELAATISERLQDRGIVQSINVSKNILTSAPDGNREAAMKVLTSRKVQLLLGYLVQSIKRASNLEEDEGYFLELQPAERGLESQIIEADIVLWTVGAKPLLTKLEPSGPNVLPLNARGQAETDETLRVKGHPRIFALGDSSSLRDSNGKILPTTAQVAFQEADFTGWNIWAAINNRPLLPFRFQNLGEMMTLGRYDAAISPSFIEGLTLEGPIGHAARKLAYLIRLPTDEHRFKVGISWFAKSAVDSIALLQSNLTKVLSGS</sequence>
<reference key="1">
    <citation type="journal article" date="2000" name="Nature">
        <title>Sequence and analysis of chromosome 5 of the plant Arabidopsis thaliana.</title>
        <authorList>
            <person name="Tabata S."/>
            <person name="Kaneko T."/>
            <person name="Nakamura Y."/>
            <person name="Kotani H."/>
            <person name="Kato T."/>
            <person name="Asamizu E."/>
            <person name="Miyajima N."/>
            <person name="Sasamoto S."/>
            <person name="Kimura T."/>
            <person name="Hosouchi T."/>
            <person name="Kawashima K."/>
            <person name="Kohara M."/>
            <person name="Matsumoto M."/>
            <person name="Matsuno A."/>
            <person name="Muraki A."/>
            <person name="Nakayama S."/>
            <person name="Nakazaki N."/>
            <person name="Naruo K."/>
            <person name="Okumura S."/>
            <person name="Shinpo S."/>
            <person name="Takeuchi C."/>
            <person name="Wada T."/>
            <person name="Watanabe A."/>
            <person name="Yamada M."/>
            <person name="Yasuda M."/>
            <person name="Sato S."/>
            <person name="de la Bastide M."/>
            <person name="Huang E."/>
            <person name="Spiegel L."/>
            <person name="Gnoj L."/>
            <person name="O'Shaughnessy A."/>
            <person name="Preston R."/>
            <person name="Habermann K."/>
            <person name="Murray J."/>
            <person name="Johnson D."/>
            <person name="Rohlfing T."/>
            <person name="Nelson J."/>
            <person name="Stoneking T."/>
            <person name="Pepin K."/>
            <person name="Spieth J."/>
            <person name="Sekhon M."/>
            <person name="Armstrong J."/>
            <person name="Becker M."/>
            <person name="Belter E."/>
            <person name="Cordum H."/>
            <person name="Cordes M."/>
            <person name="Courtney L."/>
            <person name="Courtney W."/>
            <person name="Dante M."/>
            <person name="Du H."/>
            <person name="Edwards J."/>
            <person name="Fryman J."/>
            <person name="Haakensen B."/>
            <person name="Lamar E."/>
            <person name="Latreille P."/>
            <person name="Leonard S."/>
            <person name="Meyer R."/>
            <person name="Mulvaney E."/>
            <person name="Ozersky P."/>
            <person name="Riley A."/>
            <person name="Strowmatt C."/>
            <person name="Wagner-McPherson C."/>
            <person name="Wollam A."/>
            <person name="Yoakum M."/>
            <person name="Bell M."/>
            <person name="Dedhia N."/>
            <person name="Parnell L."/>
            <person name="Shah R."/>
            <person name="Rodriguez M."/>
            <person name="Hoon See L."/>
            <person name="Vil D."/>
            <person name="Baker J."/>
            <person name="Kirchoff K."/>
            <person name="Toth K."/>
            <person name="King L."/>
            <person name="Bahret A."/>
            <person name="Miller B."/>
            <person name="Marra M.A."/>
            <person name="Martienssen R."/>
            <person name="McCombie W.R."/>
            <person name="Wilson R.K."/>
            <person name="Murphy G."/>
            <person name="Bancroft I."/>
            <person name="Volckaert G."/>
            <person name="Wambutt R."/>
            <person name="Duesterhoeft A."/>
            <person name="Stiekema W."/>
            <person name="Pohl T."/>
            <person name="Entian K.-D."/>
            <person name="Terryn N."/>
            <person name="Hartley N."/>
            <person name="Bent E."/>
            <person name="Johnson S."/>
            <person name="Langham S.-A."/>
            <person name="McCullagh B."/>
            <person name="Robben J."/>
            <person name="Grymonprez B."/>
            <person name="Zimmermann W."/>
            <person name="Ramsperger U."/>
            <person name="Wedler H."/>
            <person name="Balke K."/>
            <person name="Wedler E."/>
            <person name="Peters S."/>
            <person name="van Staveren M."/>
            <person name="Dirkse W."/>
            <person name="Mooijman P."/>
            <person name="Klein Lankhorst R."/>
            <person name="Weitzenegger T."/>
            <person name="Bothe G."/>
            <person name="Rose M."/>
            <person name="Hauf J."/>
            <person name="Berneiser S."/>
            <person name="Hempel S."/>
            <person name="Feldpausch M."/>
            <person name="Lamberth S."/>
            <person name="Villarroel R."/>
            <person name="Gielen J."/>
            <person name="Ardiles W."/>
            <person name="Bents O."/>
            <person name="Lemcke K."/>
            <person name="Kolesov G."/>
            <person name="Mayer K.F.X."/>
            <person name="Rudd S."/>
            <person name="Schoof H."/>
            <person name="Schueller C."/>
            <person name="Zaccaria P."/>
            <person name="Mewes H.-W."/>
            <person name="Bevan M."/>
            <person name="Fransz P.F."/>
        </authorList>
    </citation>
    <scope>NUCLEOTIDE SEQUENCE [LARGE SCALE GENOMIC DNA]</scope>
    <source>
        <strain>cv. Columbia</strain>
    </source>
</reference>
<reference key="2">
    <citation type="journal article" date="2017" name="Plant J.">
        <title>Araport11: a complete reannotation of the Arabidopsis thaliana reference genome.</title>
        <authorList>
            <person name="Cheng C.Y."/>
            <person name="Krishnakumar V."/>
            <person name="Chan A.P."/>
            <person name="Thibaud-Nissen F."/>
            <person name="Schobel S."/>
            <person name="Town C.D."/>
        </authorList>
    </citation>
    <scope>GENOME REANNOTATION</scope>
    <scope>SEQUENCE REVISION</scope>
    <source>
        <strain>cv. Columbia</strain>
    </source>
</reference>
<reference key="3">
    <citation type="journal article" date="2002" name="Science">
        <title>Functional annotation of a full-length Arabidopsis cDNA collection.</title>
        <authorList>
            <person name="Seki M."/>
            <person name="Narusaka M."/>
            <person name="Kamiya A."/>
            <person name="Ishida J."/>
            <person name="Satou M."/>
            <person name="Sakurai T."/>
            <person name="Nakajima M."/>
            <person name="Enju A."/>
            <person name="Akiyama K."/>
            <person name="Oono Y."/>
            <person name="Muramatsu M."/>
            <person name="Hayashizaki Y."/>
            <person name="Kawai J."/>
            <person name="Carninci P."/>
            <person name="Itoh M."/>
            <person name="Ishii Y."/>
            <person name="Arakawa T."/>
            <person name="Shibata K."/>
            <person name="Shinagawa A."/>
            <person name="Shinozaki K."/>
        </authorList>
    </citation>
    <scope>NUCLEOTIDE SEQUENCE [LARGE SCALE MRNA] (ISOFORM 1)</scope>
    <source>
        <strain>cv. Columbia</strain>
    </source>
</reference>
<reference key="4">
    <citation type="journal article" date="2003" name="Science">
        <title>Empirical analysis of transcriptional activity in the Arabidopsis genome.</title>
        <authorList>
            <person name="Yamada K."/>
            <person name="Lim J."/>
            <person name="Dale J.M."/>
            <person name="Chen H."/>
            <person name="Shinn P."/>
            <person name="Palm C.J."/>
            <person name="Southwick A.M."/>
            <person name="Wu H.C."/>
            <person name="Kim C.J."/>
            <person name="Nguyen M."/>
            <person name="Pham P.K."/>
            <person name="Cheuk R.F."/>
            <person name="Karlin-Newmann G."/>
            <person name="Liu S.X."/>
            <person name="Lam B."/>
            <person name="Sakano H."/>
            <person name="Wu T."/>
            <person name="Yu G."/>
            <person name="Miranda M."/>
            <person name="Quach H.L."/>
            <person name="Tripp M."/>
            <person name="Chang C.H."/>
            <person name="Lee J.M."/>
            <person name="Toriumi M.J."/>
            <person name="Chan M.M."/>
            <person name="Tang C.C."/>
            <person name="Onodera C.S."/>
            <person name="Deng J.M."/>
            <person name="Akiyama K."/>
            <person name="Ansari Y."/>
            <person name="Arakawa T."/>
            <person name="Banh J."/>
            <person name="Banno F."/>
            <person name="Bowser L."/>
            <person name="Brooks S.Y."/>
            <person name="Carninci P."/>
            <person name="Chao Q."/>
            <person name="Choy N."/>
            <person name="Enju A."/>
            <person name="Goldsmith A.D."/>
            <person name="Gurjal M."/>
            <person name="Hansen N.F."/>
            <person name="Hayashizaki Y."/>
            <person name="Johnson-Hopson C."/>
            <person name="Hsuan V.W."/>
            <person name="Iida K."/>
            <person name="Karnes M."/>
            <person name="Khan S."/>
            <person name="Koesema E."/>
            <person name="Ishida J."/>
            <person name="Jiang P.X."/>
            <person name="Jones T."/>
            <person name="Kawai J."/>
            <person name="Kamiya A."/>
            <person name="Meyers C."/>
            <person name="Nakajima M."/>
            <person name="Narusaka M."/>
            <person name="Seki M."/>
            <person name="Sakurai T."/>
            <person name="Satou M."/>
            <person name="Tamse R."/>
            <person name="Vaysberg M."/>
            <person name="Wallender E.K."/>
            <person name="Wong C."/>
            <person name="Yamamura Y."/>
            <person name="Yuan S."/>
            <person name="Shinozaki K."/>
            <person name="Davis R.W."/>
            <person name="Theologis A."/>
            <person name="Ecker J.R."/>
        </authorList>
    </citation>
    <scope>NUCLEOTIDE SEQUENCE [LARGE SCALE MRNA] (ISOFORM 2)</scope>
    <source>
        <strain>cv. Columbia</strain>
    </source>
</reference>
<reference key="5">
    <citation type="journal article" date="2004" name="Plant Physiol.">
        <title>Light regulation of the Arabidopsis respiratory chain. Multiple discrete photoreceptor responses contribute to induction of type II NAD(P)H dehydrogenase genes.</title>
        <authorList>
            <person name="Escobar M.A."/>
            <person name="Franklin K.A."/>
            <person name="Svensson A.S."/>
            <person name="Salter M.G."/>
            <person name="Whitelam G.C."/>
            <person name="Rasmusson A.G."/>
        </authorList>
    </citation>
    <scope>NUCLEOTIDE SEQUENCE [GENOMIC DNA] OF 440-519 (ISOFORM 1)</scope>
    <scope>INDUCTION BY LIGHT</scope>
</reference>
<reference key="6">
    <citation type="journal article" date="2003" name="Plant Physiol.">
        <title>Arabidopsis genes encoding mitochondrial type II NAD(P)H dehydrogenases have different evolutionary origin and show distinct responses to light.</title>
        <authorList>
            <person name="Michalecka A.M."/>
            <person name="Svensson A.S."/>
            <person name="Johansson F.I."/>
            <person name="Agius S.C."/>
            <person name="Johanson U."/>
            <person name="Brennicke A."/>
            <person name="Binder S."/>
            <person name="Rasmusson A.G."/>
        </authorList>
    </citation>
    <scope>FUNCTION</scope>
    <scope>SUBCELLULAR LOCATION</scope>
    <scope>TISSUE SPECIFICITY</scope>
    <scope>ALTERNATIVE SPLICING</scope>
</reference>
<reference key="7">
    <citation type="journal article" date="2004" name="Annu. Rev. Plant Biol.">
        <title>Alternative NAD(P)H dehydrogenases of plant mitochondria.</title>
        <authorList>
            <person name="Rasmusson A.G."/>
            <person name="Soole K.L."/>
            <person name="Elthon T.E."/>
        </authorList>
    </citation>
    <scope>REVIEW</scope>
</reference>
<reference key="8">
    <citation type="journal article" date="2006" name="Plant Cell Physiol.">
        <title>Characterization of mitochondrial alternative NAD(P)H dehydrogenases in Arabidopsis: intraorganelle location and expression.</title>
        <authorList>
            <person name="Elhafez D."/>
            <person name="Murcha M.W."/>
            <person name="Clifton R."/>
            <person name="Soole K.L."/>
            <person name="Day D.A."/>
            <person name="Whelan J."/>
        </authorList>
    </citation>
    <scope>SUBCELLULAR LOCATION</scope>
</reference>
<reference key="9">
    <citation type="journal article" date="2006" name="Plant Physiol.">
        <title>Protein profiling of plastoglobules in chloroplasts and chromoplasts. A surprising site for differential accumulation of metabolic enzymes.</title>
        <authorList>
            <person name="Ytterberg A.J."/>
            <person name="Peltier J.-B."/>
            <person name="van Wijk K.J."/>
        </authorList>
    </citation>
    <scope>IDENTIFICATION BY MASS SPECTROMETRY</scope>
    <scope>SUBCELLULAR LOCATION [LARGE SCALE ANALYSIS]</scope>
    <source>
        <strain>cv. Columbia</strain>
    </source>
</reference>
<reference key="10">
    <citation type="journal article" date="2008" name="FEBS Lett.">
        <title>Type II NAD(P)H dehydrogenases are targeted to mitochondria and chloroplasts or peroxisomes in Arabidopsis thaliana.</title>
        <authorList>
            <person name="Carrie C."/>
            <person name="Murcha M.W."/>
            <person name="Kuehn K."/>
            <person name="Duncan O."/>
            <person name="Barthet M."/>
            <person name="Smith P.M."/>
            <person name="Eubel H."/>
            <person name="Meyer E."/>
            <person name="Day D.A."/>
            <person name="Millar A.H."/>
            <person name="Whelan J."/>
        </authorList>
    </citation>
    <scope>SUBCELLULAR LOCATION</scope>
</reference>
<reference key="11">
    <citation type="journal article" date="2011" name="Proc. Natl. Acad. Sci. U.S.A.">
        <title>Chloroplast lipid droplet type II NAD(P)H quinone oxidoreductase is essential for prenylquinone metabolism and vitamin K1 accumulation.</title>
        <authorList>
            <person name="Eugeni Piller L."/>
            <person name="Besagni C."/>
            <person name="Ksas B."/>
            <person name="Rumeau D."/>
            <person name="Brehelin C."/>
            <person name="Glauser G."/>
            <person name="Kessler F."/>
            <person name="Havaux M."/>
        </authorList>
    </citation>
    <scope>FUNCTION</scope>
    <scope>SUBCELLULAR LOCATION</scope>
    <scope>DISRUPTION PHENOTYPE</scope>
    <scope>INDUCTION BY LIGHT</scope>
    <scope>BIOPHYSICOCHEMICAL PROPERTIES</scope>
</reference>
<reference key="12">
    <citation type="journal article" date="2012" name="Plant Physiol.">
        <title>The functional network of the Arabidopsis plastoglobule proteome based on quantitative proteomics and genome-wide coexpression analysis.</title>
        <authorList>
            <person name="Lundquist P.K."/>
            <person name="Poliakov A."/>
            <person name="Bhuiyan N.H."/>
            <person name="Zybailov B."/>
            <person name="Sun Q."/>
            <person name="van Wijk K.J."/>
        </authorList>
    </citation>
    <scope>IDENTIFICATION BY MASS SPECTROMETRY</scope>
    <scope>SUBCELLULAR LOCATION [LARGE SCALE ANALYSIS]</scope>
    <source>
        <strain>cv. Columbia</strain>
    </source>
</reference>
<reference key="13">
    <citation type="journal article" date="2013" name="BMC Plant Biol.">
        <title>The dual targeting ability of type II NAD(P)H dehydrogenases arose early in land plant evolution.</title>
        <authorList>
            <person name="Xu L."/>
            <person name="Law S.R."/>
            <person name="Murcha M.W."/>
            <person name="Whelan J."/>
            <person name="Carrie C."/>
        </authorList>
    </citation>
    <scope>SUBCELLULAR LOCATION</scope>
</reference>
<reference key="14">
    <citation type="journal article" date="2014" name="Front. Plant Sci.">
        <title>Role of plastoglobules in metabolite repair in the tocopherol redox cycle.</title>
        <authorList>
            <person name="Eugeni Piller L."/>
            <person name="Glauser G."/>
            <person name="Kessler F."/>
            <person name="Besagni C."/>
        </authorList>
    </citation>
    <scope>FUNCTION</scope>
    <scope>DISRUPTION PHENOTYPE</scope>
    <scope>SUBCELLULAR LOCATION</scope>
    <source>
        <strain>cv. Col-2</strain>
    </source>
</reference>
<reference key="15">
    <citation type="journal article" date="2015" name="Plant Cell">
        <title>A dedicated type II NADPH dehydrogenase performs the penultimate step in the biosynthesis of vitamin K1 in Synechocystis and Arabidopsis.</title>
        <authorList>
            <person name="Fatihi A."/>
            <person name="Latimer S."/>
            <person name="Schmollinger S."/>
            <person name="Block A."/>
            <person name="Dussault P.H."/>
            <person name="Vermaas W.F."/>
            <person name="Merchant S.S."/>
            <person name="Basset G.J."/>
        </authorList>
    </citation>
    <scope>FUNCTION</scope>
    <scope>CATALYTIC ACTIVITY</scope>
    <scope>BIOPHYSICOCHEMICAL PROPERTIES</scope>
    <scope>ACTIVITY REGULATION</scope>
    <scope>DISRUPTION PHENOTYPE</scope>
</reference>
<protein>
    <recommendedName>
        <fullName evidence="15">Alternative NAD(P)H-ubiquinone oxidoreductase C1, chloroplastic/mitochondrial</fullName>
        <ecNumber evidence="8">1.6.5.9</ecNumber>
    </recommendedName>
    <alternativeName>
        <fullName evidence="15">Alternative NADH dehydrogenase NDC1</fullName>
    </alternativeName>
    <alternativeName>
        <fullName evidence="16">Demethylphylloquinone reductase NDC1</fullName>
        <ecNumber evidence="8 12">1.6.5.12</ecNumber>
    </alternativeName>
    <alternativeName>
        <fullName evidence="13">NADH:ubiquinone reductase (non-electrogenic) NDC1</fullName>
    </alternativeName>
</protein>
<comment type="function">
    <text evidence="3 8 11 12">Bifunctional oxidoreductase ables to act both on prenyl naphthoquinones and on prenyl benzoquinones (PubMed:21844348, PubMed:26023160). May serve a respiratory function (PubMed:12972666). Involved in an electron flow toward the plastoglobule plastoquinone pool (PubMed:21844348, PubMed:25018761). Required for plastochromanol-8 accumulation and for phylloquinone (vitamin K1) production (PubMed:21844348, PubMed:25018761). Probably not directly involved in cyclic or chlororespiratory electron flows under standard growth conditions, but participates in the redox metabolism of plastoquinone-9 and the tocophrol recycling-intermediate alpha-tocopherol quinone (PubMed:21844348, PubMed:25018761). Catalyzes the penultimate step in the biosynthesis of vitamin K1 (PubMed:26023160).</text>
</comment>
<comment type="catalytic activity">
    <reaction evidence="8">
        <text>a quinone + NADH + H(+) = a quinol + NAD(+)</text>
        <dbReference type="Rhea" id="RHEA:46160"/>
        <dbReference type="ChEBI" id="CHEBI:15378"/>
        <dbReference type="ChEBI" id="CHEBI:24646"/>
        <dbReference type="ChEBI" id="CHEBI:57540"/>
        <dbReference type="ChEBI" id="CHEBI:57945"/>
        <dbReference type="ChEBI" id="CHEBI:132124"/>
        <dbReference type="EC" id="1.6.5.9"/>
    </reaction>
</comment>
<comment type="catalytic activity">
    <reaction evidence="8">
        <text>a ubiquinone + NADH + H(+) = a ubiquinol + NAD(+)</text>
        <dbReference type="Rhea" id="RHEA:23152"/>
        <dbReference type="Rhea" id="RHEA-COMP:9565"/>
        <dbReference type="Rhea" id="RHEA-COMP:9566"/>
        <dbReference type="ChEBI" id="CHEBI:15378"/>
        <dbReference type="ChEBI" id="CHEBI:16389"/>
        <dbReference type="ChEBI" id="CHEBI:17976"/>
        <dbReference type="ChEBI" id="CHEBI:57540"/>
        <dbReference type="ChEBI" id="CHEBI:57945"/>
    </reaction>
</comment>
<comment type="catalytic activity">
    <reaction evidence="8 12">
        <text>demethylphylloquinone + NADPH + H(+) = demethylphylloquinol + NADP(+)</text>
        <dbReference type="Rhea" id="RHEA:47744"/>
        <dbReference type="ChEBI" id="CHEBI:15378"/>
        <dbReference type="ChEBI" id="CHEBI:31087"/>
        <dbReference type="ChEBI" id="CHEBI:57783"/>
        <dbReference type="ChEBI" id="CHEBI:58349"/>
        <dbReference type="ChEBI" id="CHEBI:87844"/>
        <dbReference type="EC" id="1.6.5.12"/>
    </reaction>
</comment>
<comment type="cofactor">
    <cofactor evidence="18">
        <name>FAD</name>
        <dbReference type="ChEBI" id="CHEBI:57692"/>
    </cofactor>
    <text evidence="1">Binds 1 FAD per subunit.</text>
</comment>
<comment type="activity regulation">
    <text evidence="12">Inhibited by dicumarol.</text>
</comment>
<comment type="biophysicochemical properties">
    <kinetics>
        <KM evidence="8">9 uM for decyl-plastoquinone</KM>
        <KM evidence="12">20 uM for menadione</KM>
        <Vmax evidence="8">46.0 umol/min/mg enzyme toward decyl-plastoquinone</Vmax>
        <text evidence="12">kcat is 0.44 sec(-1) for menadione.</text>
    </kinetics>
</comment>
<comment type="subcellular location">
    <subcellularLocation>
        <location evidence="3 7 8 10">Mitochondrion</location>
    </subcellularLocation>
    <subcellularLocation>
        <location evidence="5">Mitochondrion inner membrane</location>
        <topology evidence="5">Peripheral membrane protein</topology>
        <orientation evidence="5">Matrix side</orientation>
    </subcellularLocation>
    <subcellularLocation>
        <location evidence="7 8 10">Plastid</location>
        <location evidence="7 8 10">Chloroplast</location>
    </subcellularLocation>
    <subcellularLocation>
        <location evidence="6 8 9 11">Plastid</location>
        <location evidence="6 8 9 11">Chloroplast</location>
        <location evidence="6 8 9 11">Plastoglobule</location>
    </subcellularLocation>
</comment>
<comment type="alternative products">
    <event type="alternative splicing"/>
    <isoform>
        <id>Q8GXR9-1</id>
        <name>1</name>
        <sequence type="displayed"/>
    </isoform>
    <isoform>
        <id>Q8GXR9-2</id>
        <name>2</name>
        <sequence type="described" ref="VSP_025063 VSP_025064 VSP_025065 VSP_025066"/>
    </isoform>
</comment>
<comment type="tissue specificity">
    <text evidence="3">Flowers, roots, leaves and stems.</text>
</comment>
<comment type="induction">
    <text evidence="4 8">Up-regulated by high-light.</text>
</comment>
<comment type="disruption phenotype">
    <text evidence="8 11 12">No visible phenotype (PubMed:21844348, PubMed:25018761). Increased photosensitivity to high light (PubMed:26023160).</text>
</comment>
<comment type="similarity">
    <text evidence="17">Belongs to the NADH dehydrogenase family.</text>
</comment>
<comment type="sequence caution" evidence="17">
    <conflict type="erroneous termination">
        <sequence resource="EMBL-CDS" id="BAC42708"/>
    </conflict>
    <text>Extended C-terminus.</text>
</comment>
<comment type="sequence caution" evidence="17">
    <conflict type="erroneous gene model prediction">
        <sequence resource="EMBL-CDS" id="CAC35879"/>
    </conflict>
</comment>
<dbReference type="EC" id="1.6.5.9" evidence="8"/>
<dbReference type="EC" id="1.6.5.12" evidence="8 12"/>
<dbReference type="EMBL" id="AL590346">
    <property type="protein sequence ID" value="CAC35879.1"/>
    <property type="status" value="ALT_SEQ"/>
    <property type="molecule type" value="Genomic_DNA"/>
</dbReference>
<dbReference type="EMBL" id="CP002688">
    <property type="protein sequence ID" value="AED91343.1"/>
    <property type="molecule type" value="Genomic_DNA"/>
</dbReference>
<dbReference type="EMBL" id="AK118078">
    <property type="protein sequence ID" value="BAC42708.1"/>
    <property type="status" value="ALT_SEQ"/>
    <property type="molecule type" value="mRNA"/>
</dbReference>
<dbReference type="EMBL" id="AY056424">
    <property type="protein sequence ID" value="AAL08280.1"/>
    <property type="molecule type" value="mRNA"/>
</dbReference>
<dbReference type="EMBL" id="AY127949">
    <property type="protein sequence ID" value="AAM91048.1"/>
    <property type="molecule type" value="mRNA"/>
</dbReference>
<dbReference type="EMBL" id="AJ715502">
    <property type="protein sequence ID" value="CAG29362.1"/>
    <property type="molecule type" value="Genomic_DNA"/>
</dbReference>
<dbReference type="RefSeq" id="NP_568205.6">
    <property type="nucleotide sequence ID" value="NM_120955.8"/>
</dbReference>
<dbReference type="SMR" id="Q8GXR9"/>
<dbReference type="FunCoup" id="Q8GXR9">
    <property type="interactions" value="268"/>
</dbReference>
<dbReference type="STRING" id="3702.Q8GXR9"/>
<dbReference type="SwissLipids" id="SLP:000001504"/>
<dbReference type="PaxDb" id="3702-AT5G08740.1"/>
<dbReference type="ProteomicsDB" id="236812">
    <molecule id="Q8GXR9-1"/>
</dbReference>
<dbReference type="GeneID" id="830775"/>
<dbReference type="KEGG" id="ath:AT5G08740"/>
<dbReference type="Araport" id="AT5G08740"/>
<dbReference type="TAIR" id="AT5G08740"/>
<dbReference type="eggNOG" id="KOG2495">
    <property type="taxonomic scope" value="Eukaryota"/>
</dbReference>
<dbReference type="HOGENOM" id="CLU_021377_2_0_1"/>
<dbReference type="InParanoid" id="Q8GXR9"/>
<dbReference type="PhylomeDB" id="Q8GXR9"/>
<dbReference type="BioCyc" id="ARA:AT5G08740-MONOMER"/>
<dbReference type="BioCyc" id="MetaCyc:MONOMER-19499"/>
<dbReference type="BRENDA" id="1.6.5.12">
    <property type="organism ID" value="399"/>
</dbReference>
<dbReference type="SABIO-RK" id="Q8GXR9"/>
<dbReference type="PRO" id="PR:Q8GXR9"/>
<dbReference type="Proteomes" id="UP000006548">
    <property type="component" value="Chromosome 5"/>
</dbReference>
<dbReference type="ExpressionAtlas" id="Q8GXR9">
    <property type="expression patterns" value="baseline and differential"/>
</dbReference>
<dbReference type="GO" id="GO:0009507">
    <property type="term" value="C:chloroplast"/>
    <property type="evidence" value="ECO:0000314"/>
    <property type="project" value="UniProtKB"/>
</dbReference>
<dbReference type="GO" id="GO:0005743">
    <property type="term" value="C:mitochondrial inner membrane"/>
    <property type="evidence" value="ECO:0007669"/>
    <property type="project" value="UniProtKB-SubCell"/>
</dbReference>
<dbReference type="GO" id="GO:0005739">
    <property type="term" value="C:mitochondrion"/>
    <property type="evidence" value="ECO:0000314"/>
    <property type="project" value="UniProtKB"/>
</dbReference>
<dbReference type="GO" id="GO:0010287">
    <property type="term" value="C:plastoglobule"/>
    <property type="evidence" value="ECO:0000314"/>
    <property type="project" value="UniProtKB"/>
</dbReference>
<dbReference type="GO" id="GO:0003955">
    <property type="term" value="F:NAD(P)H dehydrogenase (quinone) activity"/>
    <property type="evidence" value="ECO:0000318"/>
    <property type="project" value="GO_Central"/>
</dbReference>
<dbReference type="GO" id="GO:0050136">
    <property type="term" value="F:NADH:ubiquinone reductase (non-electrogenic) activity"/>
    <property type="evidence" value="ECO:0007669"/>
    <property type="project" value="UniProtKB-EC"/>
</dbReference>
<dbReference type="GO" id="GO:0016491">
    <property type="term" value="F:oxidoreductase activity"/>
    <property type="evidence" value="ECO:0000314"/>
    <property type="project" value="UniProtKB"/>
</dbReference>
<dbReference type="GO" id="GO:0019646">
    <property type="term" value="P:aerobic electron transport chain"/>
    <property type="evidence" value="ECO:0000318"/>
    <property type="project" value="GO_Central"/>
</dbReference>
<dbReference type="GO" id="GO:0071482">
    <property type="term" value="P:cellular response to light stimulus"/>
    <property type="evidence" value="ECO:0000270"/>
    <property type="project" value="UniProtKB"/>
</dbReference>
<dbReference type="GO" id="GO:0042372">
    <property type="term" value="P:phylloquinone biosynthetic process"/>
    <property type="evidence" value="ECO:0000318"/>
    <property type="project" value="GO_Central"/>
</dbReference>
<dbReference type="FunFam" id="3.50.50.100:FF:000010">
    <property type="entry name" value="Alternative NAD(P)H-ubiquinone oxidoreductase C1, chloroplastic/mitochondrial"/>
    <property type="match status" value="1"/>
</dbReference>
<dbReference type="Gene3D" id="3.50.50.100">
    <property type="match status" value="1"/>
</dbReference>
<dbReference type="InterPro" id="IPR036188">
    <property type="entry name" value="FAD/NAD-bd_sf"/>
</dbReference>
<dbReference type="InterPro" id="IPR023753">
    <property type="entry name" value="FAD/NAD-binding_dom"/>
</dbReference>
<dbReference type="InterPro" id="IPR051169">
    <property type="entry name" value="NADH-Q_oxidoreductase"/>
</dbReference>
<dbReference type="PANTHER" id="PTHR42913:SF4">
    <property type="entry name" value="ALTERNATIVE NAD(P)H-UBIQUINONE OXIDOREDUCTASE C1, CHLOROPLASTIC_MITOCHONDRIAL"/>
    <property type="match status" value="1"/>
</dbReference>
<dbReference type="PANTHER" id="PTHR42913">
    <property type="entry name" value="APOPTOSIS-INDUCING FACTOR 1"/>
    <property type="match status" value="1"/>
</dbReference>
<dbReference type="Pfam" id="PF07992">
    <property type="entry name" value="Pyr_redox_2"/>
    <property type="match status" value="1"/>
</dbReference>
<dbReference type="PRINTS" id="PR00368">
    <property type="entry name" value="FADPNR"/>
</dbReference>
<dbReference type="PRINTS" id="PR00411">
    <property type="entry name" value="PNDRDTASEI"/>
</dbReference>
<dbReference type="SUPFAM" id="SSF51905">
    <property type="entry name" value="FAD/NAD(P)-binding domain"/>
    <property type="match status" value="1"/>
</dbReference>
<name>NDC1_ARATH</name>
<gene>
    <name evidence="15" type="primary">NDC1</name>
    <name evidence="19" type="ordered locus">At5g08740</name>
    <name evidence="20" type="ORF">T2K12.12</name>
    <name type="ORF">T2K12_90</name>
</gene>
<keyword id="KW-0025">Alternative splicing</keyword>
<keyword id="KW-0150">Chloroplast</keyword>
<keyword id="KW-0274">FAD</keyword>
<keyword id="KW-0285">Flavoprotein</keyword>
<keyword id="KW-0472">Membrane</keyword>
<keyword id="KW-0496">Mitochondrion</keyword>
<keyword id="KW-0999">Mitochondrion inner membrane</keyword>
<keyword id="KW-0520">NAD</keyword>
<keyword id="KW-0521">NADP</keyword>
<keyword id="KW-0560">Oxidoreductase</keyword>
<keyword id="KW-0934">Plastid</keyword>
<keyword id="KW-1185">Reference proteome</keyword>
<keyword id="KW-0809">Transit peptide</keyword>
<feature type="transit peptide" description="Chloroplast and mitochondrion" evidence="2">
    <location>
        <begin position="1"/>
        <end position="52"/>
    </location>
</feature>
<feature type="chain" id="PRO_0000286517" description="Alternative NAD(P)H-ubiquinone oxidoreductase C1, chloroplastic/mitochondrial">
    <location>
        <begin position="53"/>
        <end position="519"/>
    </location>
</feature>
<feature type="binding site" evidence="1">
    <location>
        <begin position="82"/>
        <end position="118"/>
    </location>
    <ligand>
        <name>FAD</name>
        <dbReference type="ChEBI" id="CHEBI:57692"/>
    </ligand>
</feature>
<feature type="binding site" evidence="1">
    <location>
        <begin position="246"/>
        <end position="282"/>
    </location>
    <ligand>
        <name>NAD(+)</name>
        <dbReference type="ChEBI" id="CHEBI:57540"/>
    </ligand>
</feature>
<feature type="splice variant" id="VSP_025063" description="In isoform 2." evidence="14">
    <location>
        <begin position="1"/>
        <end position="170"/>
    </location>
</feature>
<feature type="splice variant" id="VSP_025064" description="In isoform 2." evidence="14">
    <original>VNGSEISVTGGTVLLESGFKIEYDW</original>
    <variation>MGLRFLLLEEPSCSKAVLKSNTIAR</variation>
    <location>
        <begin position="171"/>
        <end position="195"/>
    </location>
</feature>
<feature type="splice variant" id="VSP_025065" description="In isoform 2." evidence="14">
    <original>AFQEADFTGWNIW</original>
    <variation>RKKATKYEHIHVL</variation>
    <location>
        <begin position="415"/>
        <end position="427"/>
    </location>
</feature>
<feature type="splice variant" id="VSP_025066" description="In isoform 2." evidence="14">
    <location>
        <begin position="428"/>
        <end position="519"/>
    </location>
</feature>
<feature type="sequence conflict" description="In Ref. 3; BAC42708." evidence="17" ref="3">
    <original>N</original>
    <variation>H</variation>
    <location>
        <position position="404"/>
    </location>
</feature>
<feature type="sequence conflict" description="In Ref. 1; CAC35879." evidence="17" ref="1">
    <original>EHRFKVGISWF</original>
    <variation>QHLFMVRISCL</variation>
    <location>
        <begin position="487"/>
        <end position="497"/>
    </location>
</feature>
<feature type="sequence conflict" description="In Ref. 2; AED91343." evidence="17" ref="2">
    <original>KVG</original>
    <variation>MVR</variation>
    <location>
        <begin position="491"/>
        <end position="493"/>
    </location>
</feature>
<organism>
    <name type="scientific">Arabidopsis thaliana</name>
    <name type="common">Mouse-ear cress</name>
    <dbReference type="NCBI Taxonomy" id="3702"/>
    <lineage>
        <taxon>Eukaryota</taxon>
        <taxon>Viridiplantae</taxon>
        <taxon>Streptophyta</taxon>
        <taxon>Embryophyta</taxon>
        <taxon>Tracheophyta</taxon>
        <taxon>Spermatophyta</taxon>
        <taxon>Magnoliopsida</taxon>
        <taxon>eudicotyledons</taxon>
        <taxon>Gunneridae</taxon>
        <taxon>Pentapetalae</taxon>
        <taxon>rosids</taxon>
        <taxon>malvids</taxon>
        <taxon>Brassicales</taxon>
        <taxon>Brassicaceae</taxon>
        <taxon>Camelineae</taxon>
        <taxon>Arabidopsis</taxon>
    </lineage>
</organism>
<accession>Q8GXR9</accession>
<accession>F4KCG9</accession>
<accession>Q6KC19</accession>
<accession>Q93ZN8</accession>
<accession>Q9C5A3</accession>